<reference key="1">
    <citation type="journal article" date="2009" name="Plant Physiol.">
        <title>SET DOMAIN GROUP25 encodes a histone methyltransferase and is involved in FLOWERING LOCUS C activation and repression of flowering.</title>
        <authorList>
            <person name="Berr A."/>
            <person name="Xu L."/>
            <person name="Gao J."/>
            <person name="Cognat V."/>
            <person name="Steinmetz A."/>
            <person name="Dong A."/>
            <person name="Shen W.H."/>
        </authorList>
    </citation>
    <scope>NUCLEOTIDE SEQUENCE [MRNA]</scope>
    <scope>FUNCTION</scope>
    <scope>SUBCELLULAR LOCATION</scope>
    <scope>DISRUPTION PHENOTYPE</scope>
</reference>
<reference key="2">
    <citation type="journal article" date="1998" name="DNA Res.">
        <title>Structural analysis of Arabidopsis thaliana chromosome 5. VIII. Sequence features of the regions of 1,081,958 bp covered by seventeen physically assigned P1 and TAC clones.</title>
        <authorList>
            <person name="Asamizu E."/>
            <person name="Sato S."/>
            <person name="Kaneko T."/>
            <person name="Nakamura Y."/>
            <person name="Kotani H."/>
            <person name="Miyajima N."/>
            <person name="Tabata S."/>
        </authorList>
    </citation>
    <scope>NUCLEOTIDE SEQUENCE [LARGE SCALE GENOMIC DNA]</scope>
    <source>
        <strain>cv. Columbia</strain>
    </source>
</reference>
<reference key="3">
    <citation type="journal article" date="2017" name="Plant J.">
        <title>Araport11: a complete reannotation of the Arabidopsis thaliana reference genome.</title>
        <authorList>
            <person name="Cheng C.Y."/>
            <person name="Krishnakumar V."/>
            <person name="Chan A.P."/>
            <person name="Thibaud-Nissen F."/>
            <person name="Schobel S."/>
            <person name="Town C.D."/>
        </authorList>
    </citation>
    <scope>GENOME REANNOTATION</scope>
    <source>
        <strain>cv. Columbia</strain>
    </source>
</reference>
<reference key="4">
    <citation type="submission" date="2005-03" db="EMBL/GenBank/DDBJ databases">
        <title>Large-scale analysis of RIKEN Arabidopsis full-length (RAFL) cDNAs.</title>
        <authorList>
            <person name="Totoki Y."/>
            <person name="Seki M."/>
            <person name="Ishida J."/>
            <person name="Nakajima M."/>
            <person name="Enju A."/>
            <person name="Kamiya A."/>
            <person name="Narusaka M."/>
            <person name="Shin-i T."/>
            <person name="Nakagawa M."/>
            <person name="Sakamoto N."/>
            <person name="Oishi K."/>
            <person name="Kohara Y."/>
            <person name="Kobayashi M."/>
            <person name="Toyoda A."/>
            <person name="Sakaki Y."/>
            <person name="Sakurai T."/>
            <person name="Iida K."/>
            <person name="Akiyama K."/>
            <person name="Satou M."/>
            <person name="Toyoda T."/>
            <person name="Konagaya A."/>
            <person name="Carninci P."/>
            <person name="Kawai J."/>
            <person name="Hayashizaki Y."/>
            <person name="Shinozaki K."/>
        </authorList>
    </citation>
    <scope>NUCLEOTIDE SEQUENCE [LARGE SCALE MRNA] OF 1-513</scope>
    <source>
        <strain>cv. Columbia</strain>
    </source>
</reference>
<reference key="5">
    <citation type="journal article" date="2001" name="Nucleic Acids Res.">
        <title>The Arabidopsis thaliana genome contains at least 29 active genes encoding SET domain proteins that can be assigned to four evolutionarily conserved classes.</title>
        <authorList>
            <person name="Baumbusch L.O."/>
            <person name="Thorstensen T."/>
            <person name="Krauss V."/>
            <person name="Fischer A."/>
            <person name="Naumann K."/>
            <person name="Assalkhou R."/>
            <person name="Schulz I."/>
            <person name="Reuter G."/>
            <person name="Aalen R.B."/>
        </authorList>
    </citation>
    <scope>NUCLEOTIDE SEQUENCE [MRNA] OF 1032-1290</scope>
</reference>
<reference key="6">
    <citation type="journal article" date="2009" name="Plant Cell">
        <title>ARABIDOPSIS TRITHORAX-RELATED7 is required for methylation of lysine 4 of histone H3 and for transcriptional activation of FLOWERING LOCUS C.</title>
        <authorList>
            <person name="Tamada Y."/>
            <person name="Yun J.Y."/>
            <person name="Woo S.C."/>
            <person name="Amasino R.M."/>
        </authorList>
    </citation>
    <scope>FUNCTION</scope>
    <scope>TISSUE SPECIFICITY</scope>
    <scope>DISRUPTION PHENOTYPE</scope>
</reference>
<reference key="7">
    <citation type="journal article" date="2011" name="PLoS ONE">
        <title>Identification of the Arabidopsis REDUCED DORMANCY 2 gene uncovers a role for the polymerase associated factor 1 complex in seed dormancy.</title>
        <authorList>
            <person name="Liu Y."/>
            <person name="Geyer R."/>
            <person name="van Zanten M."/>
            <person name="Carles A."/>
            <person name="Li Y."/>
            <person name="Horold A."/>
            <person name="van Nocker S."/>
            <person name="Soppe W.J."/>
        </authorList>
    </citation>
    <scope>FUNCTION</scope>
    <scope>DISRUPTION PHENOTYPE</scope>
</reference>
<proteinExistence type="evidence at transcript level"/>
<evidence type="ECO:0000255" key="1">
    <source>
        <dbReference type="PROSITE-ProRule" id="PRU00101"/>
    </source>
</evidence>
<evidence type="ECO:0000255" key="2">
    <source>
        <dbReference type="PROSITE-ProRule" id="PRU00190"/>
    </source>
</evidence>
<evidence type="ECO:0000256" key="3">
    <source>
        <dbReference type="SAM" id="MobiDB-lite"/>
    </source>
</evidence>
<evidence type="ECO:0000269" key="4">
    <source>
    </source>
</evidence>
<evidence type="ECO:0000269" key="5">
    <source>
    </source>
</evidence>
<evidence type="ECO:0000269" key="6">
    <source>
    </source>
</evidence>
<evidence type="ECO:0000303" key="7">
    <source>
    </source>
</evidence>
<evidence type="ECO:0000303" key="8">
    <source>
    </source>
</evidence>
<evidence type="ECO:0000305" key="9"/>
<evidence type="ECO:0000305" key="10">
    <source>
    </source>
</evidence>
<evidence type="ECO:0000305" key="11">
    <source>
    </source>
</evidence>
<evidence type="ECO:0000312" key="12">
    <source>
        <dbReference type="Araport" id="AT5G42400"/>
    </source>
</evidence>
<evidence type="ECO:0000312" key="13">
    <source>
        <dbReference type="EMBL" id="BAB10481.1"/>
    </source>
</evidence>
<protein>
    <recommendedName>
        <fullName evidence="9">Histone-lysine N-methyltransferase ATXR7</fullName>
        <ecNumber evidence="11">2.1.1.354</ecNumber>
        <ecNumber evidence="10">2.1.1.357</ecNumber>
    </recommendedName>
    <alternativeName>
        <fullName evidence="7">Protein SET DOMAIN GROUP 25</fullName>
    </alternativeName>
    <alternativeName>
        <fullName evidence="8">Trithorax-related protein 7</fullName>
    </alternativeName>
</protein>
<gene>
    <name evidence="8" type="primary">ATXR7</name>
    <name evidence="7" type="synonym">SDG25</name>
    <name evidence="12" type="ordered locus">At5g42400</name>
    <name evidence="13" type="ORF">MDH9.9</name>
</gene>
<sequence length="1423" mass="158663">MVAVDSTFPSHGSSYSSRRKKVSALEPNYFGSMCMGVYSDDVSISAREVAQDYSCDSCGDLATVSSACCNFDELCGLDSALEMGCRSNEDCRAGQEASGSGIASGLDKSVPGYTMYASGWMYGNQQGQMCGPYTQQQLYDGLSTNFLPEDLLVYPIINGYTANSVPLKYFKQFPDHVATGFAYLQNGIISVAPSVTSFPPSSSNATVHQDEIQTEHATSATHLISHQTMPPQTSSNGSVLDQLTLNHEESNMLASFLSLGNEHACWFLVDGEGRNHGPHSILELFSWQQHGYVSDAALIRDGENKLRPITLASLIGVWRVKCGDANCDEPVTGVNFISEVSEELSVHLQSGIMKIARRALLDEIISSVISDFLKAKKSDEHLKSYPPTSAVESISSRVINAEKSVVSNTESAGCKNTMNEGGHSSIAAESSKYTKSVGSIENFQTSCSAVCRTLHHHCMQIMWNAVFYDTVATHSSCWRKNKIWFRSSDISTVNYCKGSHTKYSDKPESFESFTCRVDSSSSKTAYSDEFDLATNGARVRGLSSDTYGTESVIASISEHVENELFLSLKTHLTDYTSILIKDGANNTTSSARDGKMHEGSFREQYNLEGSSKKKNGLNVVPAKLRFSNDFSDSQRLLQEGESSEQITSEDIIANIFSTALETSDIPVNDELDALAIHEPPPPGCESNINMPCLRYKYQPVRSKESIPEIKAYVSMALCRQKLHNDVMRDWKSLFLKCYLNEFLASLKGSHQVSRKETLALKKRKTVTRNKKLVQSNISNQTAEKLRKPCVGASEKVLVKRSKKLSDSHSMKEVLKVDTPSIDLSVRKPSQQKMRNTDRRDHCIIKDATKLHKEKVGKDAFSKVICDKSQDLEMEDEFDDALLITRLRRISRNKTKELRECRNAAKSCEEISVTAEESEETVDCKDHEESLSNKPSQKVKKAHTSKLKRKNLSDARDEGTKSCNGAVKSFTEISGKEGDTESLGLAISDKVSHQNLSKRRKSKIALFLFPGFENTSRKCFTKLLSPEDAAKNGQDMSNPTGNPPRLAEGKKFVEKSACSISQKGRKSSQSSILKRKHQLDEKISNVPSRRRLSLSSTDSEDAVIKEDYDVRNEEKLPCHTSDKLQKGPNKLIRRRKPLAKHTTERSPIKDLSVDDGRPKPIALKPLEKLSSKPSKKKLFLSIPKSDGCARTSINGWHWHAWSLKASAEERARVRGSSCVHMQHFGSKSSLTQNVLSARTNRAKLRNLLAAADGADVLKMSQLKARKKHLRFQQSKIHDWGLVALEPIEAEDFVIEYVGELIRSSISEIRERQYEKMGIGSSYLFRLDDGYVLDATKRGGIARFINHSCEPNCYTKIISVEGKKKIFIYAKRHIDAGEEISYNYKFPLEDDKIPCNCGAPNVYCFCEQVPWIAKLKRRTWFSRRN</sequence>
<name>ATXR7_ARATH</name>
<feature type="chain" id="PRO_0000432765" description="Histone-lysine N-methyltransferase ATXR7">
    <location>
        <begin position="1"/>
        <end position="1423"/>
    </location>
</feature>
<feature type="domain" description="GYF" evidence="1">
    <location>
        <begin position="263"/>
        <end position="312"/>
    </location>
</feature>
<feature type="domain" description="SET" evidence="2">
    <location>
        <begin position="1266"/>
        <end position="1383"/>
    </location>
</feature>
<feature type="region of interest" description="Disordered" evidence="3">
    <location>
        <begin position="923"/>
        <end position="960"/>
    </location>
</feature>
<feature type="region of interest" description="Disordered" evidence="3">
    <location>
        <begin position="1057"/>
        <end position="1097"/>
    </location>
</feature>
<feature type="region of interest" description="Disordered" evidence="3">
    <location>
        <begin position="1115"/>
        <end position="1158"/>
    </location>
</feature>
<feature type="compositionally biased region" description="Basic residues" evidence="3">
    <location>
        <begin position="936"/>
        <end position="949"/>
    </location>
</feature>
<feature type="compositionally biased region" description="Basic and acidic residues" evidence="3">
    <location>
        <begin position="950"/>
        <end position="959"/>
    </location>
</feature>
<feature type="compositionally biased region" description="Polar residues" evidence="3">
    <location>
        <begin position="1057"/>
        <end position="1071"/>
    </location>
</feature>
<feature type="compositionally biased region" description="Basic and acidic residues" evidence="3">
    <location>
        <begin position="1115"/>
        <end position="1124"/>
    </location>
</feature>
<feature type="compositionally biased region" description="Basic and acidic residues" evidence="3">
    <location>
        <begin position="1140"/>
        <end position="1157"/>
    </location>
</feature>
<feature type="binding site" evidence="2">
    <location>
        <position position="1382"/>
    </location>
    <ligand>
        <name>S-adenosyl-L-methionine</name>
        <dbReference type="ChEBI" id="CHEBI:59789"/>
    </ligand>
</feature>
<feature type="sequence conflict" description="In Ref. 5; AAL01112." evidence="9" ref="5">
    <original>A</original>
    <variation>V</variation>
    <location>
        <position position="1046"/>
    </location>
</feature>
<feature type="sequence conflict" description="In Ref. 5; AAL01112." evidence="9" ref="5">
    <original>Q</original>
    <variation>K</variation>
    <location>
        <position position="1124"/>
    </location>
</feature>
<comment type="function">
    <text evidence="4 5 6">Histone methyltransferase involved in regulation of flowering time. Required for the expression of the flowering repressors FLC and MADS-box genes of the MAF family (PubMed:19726574, PubMed:19855050). Required for histone H3 dimethylation on 'Lys-36' H3K36me2 at the FLC locus (PubMed:19726574). Required for histone H3 trimethylation on 'Lys-4' (H3K4me3) at the FLC locus. Prevents trimethylation on 'Lys-27' (H3K27me3) at the same locus (PubMed:19855050). Involved in the control of seed dormancy and germination (PubMed:21799800).</text>
</comment>
<comment type="catalytic activity">
    <reaction evidence="11">
        <text>L-lysyl(4)-[histone H3] + 3 S-adenosyl-L-methionine = N(6),N(6),N(6)-trimethyl-L-lysyl(4)-[histone H3] + 3 S-adenosyl-L-homocysteine + 3 H(+)</text>
        <dbReference type="Rhea" id="RHEA:60260"/>
        <dbReference type="Rhea" id="RHEA-COMP:15537"/>
        <dbReference type="Rhea" id="RHEA-COMP:15547"/>
        <dbReference type="ChEBI" id="CHEBI:15378"/>
        <dbReference type="ChEBI" id="CHEBI:29969"/>
        <dbReference type="ChEBI" id="CHEBI:57856"/>
        <dbReference type="ChEBI" id="CHEBI:59789"/>
        <dbReference type="ChEBI" id="CHEBI:61961"/>
        <dbReference type="EC" id="2.1.1.354"/>
    </reaction>
</comment>
<comment type="catalytic activity">
    <reaction evidence="10">
        <text>L-lysyl(36)-[histone H3] + 2 S-adenosyl-L-methionine = N(6),N(6)-dimethyl-L-lysyl(36)-[histone H3] + 2 S-adenosyl-L-homocysteine + 2 H(+)</text>
        <dbReference type="Rhea" id="RHEA:60308"/>
        <dbReference type="Rhea" id="RHEA-COMP:9785"/>
        <dbReference type="Rhea" id="RHEA-COMP:9787"/>
        <dbReference type="ChEBI" id="CHEBI:15378"/>
        <dbReference type="ChEBI" id="CHEBI:29969"/>
        <dbReference type="ChEBI" id="CHEBI:57856"/>
        <dbReference type="ChEBI" id="CHEBI:59789"/>
        <dbReference type="ChEBI" id="CHEBI:61976"/>
        <dbReference type="EC" id="2.1.1.357"/>
    </reaction>
</comment>
<comment type="subcellular location">
    <subcellularLocation>
        <location evidence="4">Nucleus</location>
    </subcellularLocation>
</comment>
<comment type="tissue specificity">
    <text evidence="5">Expressed in the shoot and root apices, vascular tissues and mesophyll cells of rosette leaves.</text>
</comment>
<comment type="disruption phenotype">
    <text evidence="4 5 6">Early flowering (PubMed:19726574, PubMed:19855050). Reduced seed dormancy and increased germination rate of freshly harvested seeds (PubMed:21799800).</text>
</comment>
<comment type="similarity">
    <text evidence="9">Belongs to the class V-like SAM-binding methyltransferase superfamily. Histone-lysine methyltransferase family. TRX/MLL subfamily.</text>
</comment>
<comment type="sequence caution" evidence="9">
    <conflict type="miscellaneous discrepancy">
        <sequence resource="EMBL-CDS" id="ABV68922"/>
    </conflict>
    <text>Sequencing errors.</text>
</comment>
<comment type="sequence caution" evidence="9">
    <conflict type="erroneous gene model prediction">
        <sequence resource="EMBL-CDS" id="BAB10481"/>
    </conflict>
</comment>
<keyword id="KW-0156">Chromatin regulator</keyword>
<keyword id="KW-0287">Flowering</keyword>
<keyword id="KW-0489">Methyltransferase</keyword>
<keyword id="KW-0539">Nucleus</keyword>
<keyword id="KW-1185">Reference proteome</keyword>
<keyword id="KW-0949">S-adenosyl-L-methionine</keyword>
<keyword id="KW-0804">Transcription</keyword>
<keyword id="KW-0805">Transcription regulation</keyword>
<keyword id="KW-0808">Transferase</keyword>
<dbReference type="EC" id="2.1.1.354" evidence="11"/>
<dbReference type="EC" id="2.1.1.357" evidence="10"/>
<dbReference type="EMBL" id="EU014691">
    <property type="protein sequence ID" value="ABV68922.1"/>
    <property type="status" value="ALT_SEQ"/>
    <property type="molecule type" value="mRNA"/>
</dbReference>
<dbReference type="EMBL" id="AB016888">
    <property type="protein sequence ID" value="BAB10481.1"/>
    <property type="status" value="ALT_SEQ"/>
    <property type="molecule type" value="Genomic_DNA"/>
</dbReference>
<dbReference type="EMBL" id="CP002688">
    <property type="status" value="NOT_ANNOTATED_CDS"/>
    <property type="molecule type" value="Genomic_DNA"/>
</dbReference>
<dbReference type="EMBL" id="AK221587">
    <property type="protein sequence ID" value="BAD95095.1"/>
    <property type="molecule type" value="mRNA"/>
</dbReference>
<dbReference type="EMBL" id="AF408061">
    <property type="protein sequence ID" value="AAL01112.1"/>
    <property type="molecule type" value="mRNA"/>
</dbReference>
<dbReference type="RefSeq" id="NP_001318731.1">
    <property type="nucleotide sequence ID" value="NM_001344444.1"/>
</dbReference>
<dbReference type="RefSeq" id="NP_001330664.1">
    <property type="nucleotide sequence ID" value="NM_001344445.1"/>
</dbReference>
<dbReference type="RefSeq" id="NP_001330665.1">
    <property type="nucleotide sequence ID" value="NM_001344446.1"/>
</dbReference>
<dbReference type="RefSeq" id="NP_001330666.1">
    <property type="nucleotide sequence ID" value="NM_001344449.1"/>
</dbReference>
<dbReference type="RefSeq" id="NP_001330667.1">
    <property type="nucleotide sequence ID" value="NM_001344450.1"/>
</dbReference>
<dbReference type="RefSeq" id="NP_001330668.1">
    <property type="nucleotide sequence ID" value="NM_001344447.1"/>
</dbReference>
<dbReference type="RefSeq" id="NP_001330669.1">
    <property type="nucleotide sequence ID" value="NM_001344448.1"/>
</dbReference>
<dbReference type="RefSeq" id="NP_001330670.1">
    <property type="nucleotide sequence ID" value="NM_001344451.1"/>
</dbReference>
<dbReference type="SMR" id="F4K1J4"/>
<dbReference type="FunCoup" id="F4K1J4">
    <property type="interactions" value="21"/>
</dbReference>
<dbReference type="STRING" id="3702.F4K1J4"/>
<dbReference type="PaxDb" id="3702-AT5G42400.1"/>
<dbReference type="GeneID" id="834246"/>
<dbReference type="KEGG" id="ath:AT5G42400"/>
<dbReference type="Araport" id="AT5G42400"/>
<dbReference type="TAIR" id="AT5G42400">
    <property type="gene designation" value="SDG25"/>
</dbReference>
<dbReference type="eggNOG" id="KOG1080">
    <property type="taxonomic scope" value="Eukaryota"/>
</dbReference>
<dbReference type="HOGENOM" id="CLU_003563_0_0_1"/>
<dbReference type="InParanoid" id="F4K1J4"/>
<dbReference type="PRO" id="PR:F4K1J4"/>
<dbReference type="Proteomes" id="UP000006548">
    <property type="component" value="Chromosome 5"/>
</dbReference>
<dbReference type="ExpressionAtlas" id="F4K1J4">
    <property type="expression patterns" value="baseline and differential"/>
</dbReference>
<dbReference type="GO" id="GO:0005737">
    <property type="term" value="C:cytoplasm"/>
    <property type="evidence" value="ECO:0000314"/>
    <property type="project" value="TAIR"/>
</dbReference>
<dbReference type="GO" id="GO:0005634">
    <property type="term" value="C:nucleus"/>
    <property type="evidence" value="ECO:0000314"/>
    <property type="project" value="TAIR"/>
</dbReference>
<dbReference type="GO" id="GO:0048188">
    <property type="term" value="C:Set1C/COMPASS complex"/>
    <property type="evidence" value="ECO:0000318"/>
    <property type="project" value="GO_Central"/>
</dbReference>
<dbReference type="GO" id="GO:0140954">
    <property type="term" value="F:histone H3K36 dimethyltransferase activity"/>
    <property type="evidence" value="ECO:0007669"/>
    <property type="project" value="UniProtKB-EC"/>
</dbReference>
<dbReference type="GO" id="GO:0042800">
    <property type="term" value="F:histone H3K4 methyltransferase activity"/>
    <property type="evidence" value="ECO:0000318"/>
    <property type="project" value="GO_Central"/>
</dbReference>
<dbReference type="GO" id="GO:0140999">
    <property type="term" value="F:histone H3K4 trimethyltransferase activity"/>
    <property type="evidence" value="ECO:0007669"/>
    <property type="project" value="UniProtKB-EC"/>
</dbReference>
<dbReference type="GO" id="GO:0009908">
    <property type="term" value="P:flower development"/>
    <property type="evidence" value="ECO:0007669"/>
    <property type="project" value="UniProtKB-KW"/>
</dbReference>
<dbReference type="GO" id="GO:0032259">
    <property type="term" value="P:methylation"/>
    <property type="evidence" value="ECO:0007669"/>
    <property type="project" value="UniProtKB-KW"/>
</dbReference>
<dbReference type="GO" id="GO:0009909">
    <property type="term" value="P:regulation of flower development"/>
    <property type="evidence" value="ECO:0000315"/>
    <property type="project" value="TAIR"/>
</dbReference>
<dbReference type="GO" id="GO:0010228">
    <property type="term" value="P:vegetative to reproductive phase transition of meristem"/>
    <property type="evidence" value="ECO:0000315"/>
    <property type="project" value="TAIR"/>
</dbReference>
<dbReference type="CDD" id="cd19169">
    <property type="entry name" value="SET_SETD1"/>
    <property type="match status" value="1"/>
</dbReference>
<dbReference type="Gene3D" id="3.30.1490.40">
    <property type="match status" value="2"/>
</dbReference>
<dbReference type="Gene3D" id="2.170.270.10">
    <property type="entry name" value="SET domain"/>
    <property type="match status" value="1"/>
</dbReference>
<dbReference type="InterPro" id="IPR003169">
    <property type="entry name" value="GYF"/>
</dbReference>
<dbReference type="InterPro" id="IPR035445">
    <property type="entry name" value="GYF-like_dom_sf"/>
</dbReference>
<dbReference type="InterPro" id="IPR044570">
    <property type="entry name" value="Set1-like"/>
</dbReference>
<dbReference type="InterPro" id="IPR001214">
    <property type="entry name" value="SET_dom"/>
</dbReference>
<dbReference type="InterPro" id="IPR046341">
    <property type="entry name" value="SET_dom_sf"/>
</dbReference>
<dbReference type="InterPro" id="IPR037841">
    <property type="entry name" value="SET_SETD1A/B"/>
</dbReference>
<dbReference type="PANTHER" id="PTHR45814">
    <property type="entry name" value="HISTONE-LYSINE N-METHYLTRANSFERASE SETD1"/>
    <property type="match status" value="1"/>
</dbReference>
<dbReference type="PANTHER" id="PTHR45814:SF2">
    <property type="entry name" value="HISTONE-LYSINE N-METHYLTRANSFERASE SETD1"/>
    <property type="match status" value="1"/>
</dbReference>
<dbReference type="Pfam" id="PF00856">
    <property type="entry name" value="SET"/>
    <property type="match status" value="1"/>
</dbReference>
<dbReference type="SMART" id="SM00317">
    <property type="entry name" value="SET"/>
    <property type="match status" value="1"/>
</dbReference>
<dbReference type="SUPFAM" id="SSF55277">
    <property type="entry name" value="GYF domain"/>
    <property type="match status" value="2"/>
</dbReference>
<dbReference type="SUPFAM" id="SSF82199">
    <property type="entry name" value="SET domain"/>
    <property type="match status" value="1"/>
</dbReference>
<dbReference type="PROSITE" id="PS50829">
    <property type="entry name" value="GYF"/>
    <property type="match status" value="1"/>
</dbReference>
<dbReference type="PROSITE" id="PS50280">
    <property type="entry name" value="SET"/>
    <property type="match status" value="1"/>
</dbReference>
<organism>
    <name type="scientific">Arabidopsis thaliana</name>
    <name type="common">Mouse-ear cress</name>
    <dbReference type="NCBI Taxonomy" id="3702"/>
    <lineage>
        <taxon>Eukaryota</taxon>
        <taxon>Viridiplantae</taxon>
        <taxon>Streptophyta</taxon>
        <taxon>Embryophyta</taxon>
        <taxon>Tracheophyta</taxon>
        <taxon>Spermatophyta</taxon>
        <taxon>Magnoliopsida</taxon>
        <taxon>eudicotyledons</taxon>
        <taxon>Gunneridae</taxon>
        <taxon>Pentapetalae</taxon>
        <taxon>rosids</taxon>
        <taxon>malvids</taxon>
        <taxon>Brassicales</taxon>
        <taxon>Brassicaceae</taxon>
        <taxon>Camelineae</taxon>
        <taxon>Arabidopsis</taxon>
    </lineage>
</organism>
<accession>F4K1J4</accession>
<accession>A9QA58</accession>
<accession>Q56XT6</accession>
<accession>Q945S7</accession>
<accession>Q9FIH7</accession>